<gene>
    <name evidence="1" type="primary">tyrS</name>
    <name type="ordered locus">RSc0496</name>
    <name type="ORF">RS05028</name>
</gene>
<organism>
    <name type="scientific">Ralstonia nicotianae (strain ATCC BAA-1114 / GMI1000)</name>
    <name type="common">Ralstonia solanacearum</name>
    <dbReference type="NCBI Taxonomy" id="267608"/>
    <lineage>
        <taxon>Bacteria</taxon>
        <taxon>Pseudomonadati</taxon>
        <taxon>Pseudomonadota</taxon>
        <taxon>Betaproteobacteria</taxon>
        <taxon>Burkholderiales</taxon>
        <taxon>Burkholderiaceae</taxon>
        <taxon>Ralstonia</taxon>
        <taxon>Ralstonia solanacearum species complex</taxon>
    </lineage>
</organism>
<name>SYY_RALN1</name>
<reference key="1">
    <citation type="journal article" date="2002" name="Nature">
        <title>Genome sequence of the plant pathogen Ralstonia solanacearum.</title>
        <authorList>
            <person name="Salanoubat M."/>
            <person name="Genin S."/>
            <person name="Artiguenave F."/>
            <person name="Gouzy J."/>
            <person name="Mangenot S."/>
            <person name="Arlat M."/>
            <person name="Billault A."/>
            <person name="Brottier P."/>
            <person name="Camus J.-C."/>
            <person name="Cattolico L."/>
            <person name="Chandler M."/>
            <person name="Choisne N."/>
            <person name="Claudel-Renard C."/>
            <person name="Cunnac S."/>
            <person name="Demange N."/>
            <person name="Gaspin C."/>
            <person name="Lavie M."/>
            <person name="Moisan A."/>
            <person name="Robert C."/>
            <person name="Saurin W."/>
            <person name="Schiex T."/>
            <person name="Siguier P."/>
            <person name="Thebault P."/>
            <person name="Whalen M."/>
            <person name="Wincker P."/>
            <person name="Levy M."/>
            <person name="Weissenbach J."/>
            <person name="Boucher C.A."/>
        </authorList>
    </citation>
    <scope>NUCLEOTIDE SEQUENCE [LARGE SCALE GENOMIC DNA]</scope>
    <source>
        <strain>ATCC BAA-1114 / GMI1000</strain>
    </source>
</reference>
<accession>Q8Y240</accession>
<proteinExistence type="inferred from homology"/>
<protein>
    <recommendedName>
        <fullName evidence="1">Tyrosine--tRNA ligase</fullName>
        <ecNumber evidence="1">6.1.1.1</ecNumber>
    </recommendedName>
    <alternativeName>
        <fullName evidence="1">Tyrosyl-tRNA synthetase</fullName>
        <shortName evidence="1">TyrRS</shortName>
    </alternativeName>
</protein>
<comment type="function">
    <text evidence="1">Catalyzes the attachment of tyrosine to tRNA(Tyr) in a two-step reaction: tyrosine is first activated by ATP to form Tyr-AMP and then transferred to the acceptor end of tRNA(Tyr).</text>
</comment>
<comment type="catalytic activity">
    <reaction evidence="1">
        <text>tRNA(Tyr) + L-tyrosine + ATP = L-tyrosyl-tRNA(Tyr) + AMP + diphosphate + H(+)</text>
        <dbReference type="Rhea" id="RHEA:10220"/>
        <dbReference type="Rhea" id="RHEA-COMP:9706"/>
        <dbReference type="Rhea" id="RHEA-COMP:9707"/>
        <dbReference type="ChEBI" id="CHEBI:15378"/>
        <dbReference type="ChEBI" id="CHEBI:30616"/>
        <dbReference type="ChEBI" id="CHEBI:33019"/>
        <dbReference type="ChEBI" id="CHEBI:58315"/>
        <dbReference type="ChEBI" id="CHEBI:78442"/>
        <dbReference type="ChEBI" id="CHEBI:78536"/>
        <dbReference type="ChEBI" id="CHEBI:456215"/>
        <dbReference type="EC" id="6.1.1.1"/>
    </reaction>
</comment>
<comment type="subunit">
    <text evidence="1">Homodimer.</text>
</comment>
<comment type="subcellular location">
    <subcellularLocation>
        <location evidence="1">Cytoplasm</location>
    </subcellularLocation>
</comment>
<comment type="similarity">
    <text evidence="1">Belongs to the class-I aminoacyl-tRNA synthetase family. TyrS type 2 subfamily.</text>
</comment>
<keyword id="KW-0030">Aminoacyl-tRNA synthetase</keyword>
<keyword id="KW-0067">ATP-binding</keyword>
<keyword id="KW-0963">Cytoplasm</keyword>
<keyword id="KW-0436">Ligase</keyword>
<keyword id="KW-0547">Nucleotide-binding</keyword>
<keyword id="KW-0648">Protein biosynthesis</keyword>
<keyword id="KW-1185">Reference proteome</keyword>
<keyword id="KW-0694">RNA-binding</keyword>
<feature type="chain" id="PRO_0000236759" description="Tyrosine--tRNA ligase">
    <location>
        <begin position="1"/>
        <end position="392"/>
    </location>
</feature>
<feature type="domain" description="S4 RNA-binding" evidence="1">
    <location>
        <begin position="331"/>
        <end position="391"/>
    </location>
</feature>
<feature type="short sequence motif" description="'HIGH' region">
    <location>
        <begin position="39"/>
        <end position="48"/>
    </location>
</feature>
<feature type="short sequence motif" description="'KMSKS' region">
    <location>
        <begin position="223"/>
        <end position="227"/>
    </location>
</feature>
<feature type="binding site" evidence="1">
    <location>
        <position position="226"/>
    </location>
    <ligand>
        <name>ATP</name>
        <dbReference type="ChEBI" id="CHEBI:30616"/>
    </ligand>
</feature>
<sequence length="392" mass="43496">MEVTQRGCDELLIAAEWEQKLARSAATGVPLRIKLGLDPTAPDIHIGHTVVLNKMRQLQDLGHQVIFLIGDFTSTIGDPSGRNATRPPLTREQIEANAQTYYRQASMVLDPSKTEIRYNSEWCDPLGARGIIQLAAKYTVARMMERDDFTKRYKAGVPISVHEFLYPLMQGYDSVALKSDLELGGTDQKFNLLVGRELQKEYGQEPQCILTMPLLVGLDGVEKMSKSKGNYVGISEAPNEMFGKLMSISDDLMWTYYTLLSFRPLAEIDLMKQEVTLGRNPRDCKVLLAQEIIARFHSQADAERALEDFNHRARGGVPDDIPQIELSGAPIGIAQLLKQAGLCPSTSEANRNIEQGGVKIDGTVISDKGLKVEAGTFVMQVGKRRFARVVLS</sequence>
<dbReference type="EC" id="6.1.1.1" evidence="1"/>
<dbReference type="EMBL" id="AL646052">
    <property type="protein sequence ID" value="CAD14024.1"/>
    <property type="molecule type" value="Genomic_DNA"/>
</dbReference>
<dbReference type="SMR" id="Q8Y240"/>
<dbReference type="STRING" id="267608.RSc0496"/>
<dbReference type="EnsemblBacteria" id="CAD14024">
    <property type="protein sequence ID" value="CAD14024"/>
    <property type="gene ID" value="RSc0496"/>
</dbReference>
<dbReference type="KEGG" id="rso:RSc0496"/>
<dbReference type="eggNOG" id="COG0162">
    <property type="taxonomic scope" value="Bacteria"/>
</dbReference>
<dbReference type="HOGENOM" id="CLU_024003_5_0_4"/>
<dbReference type="Proteomes" id="UP000001436">
    <property type="component" value="Chromosome"/>
</dbReference>
<dbReference type="GO" id="GO:0005829">
    <property type="term" value="C:cytosol"/>
    <property type="evidence" value="ECO:0007669"/>
    <property type="project" value="TreeGrafter"/>
</dbReference>
<dbReference type="GO" id="GO:0005524">
    <property type="term" value="F:ATP binding"/>
    <property type="evidence" value="ECO:0007669"/>
    <property type="project" value="UniProtKB-UniRule"/>
</dbReference>
<dbReference type="GO" id="GO:0003723">
    <property type="term" value="F:RNA binding"/>
    <property type="evidence" value="ECO:0007669"/>
    <property type="project" value="UniProtKB-KW"/>
</dbReference>
<dbReference type="GO" id="GO:0004831">
    <property type="term" value="F:tyrosine-tRNA ligase activity"/>
    <property type="evidence" value="ECO:0007669"/>
    <property type="project" value="UniProtKB-UniRule"/>
</dbReference>
<dbReference type="GO" id="GO:0006437">
    <property type="term" value="P:tyrosyl-tRNA aminoacylation"/>
    <property type="evidence" value="ECO:0007669"/>
    <property type="project" value="UniProtKB-UniRule"/>
</dbReference>
<dbReference type="CDD" id="cd00165">
    <property type="entry name" value="S4"/>
    <property type="match status" value="1"/>
</dbReference>
<dbReference type="CDD" id="cd00805">
    <property type="entry name" value="TyrRS_core"/>
    <property type="match status" value="1"/>
</dbReference>
<dbReference type="FunFam" id="1.10.240.10:FF:000006">
    <property type="entry name" value="Tyrosine--tRNA ligase"/>
    <property type="match status" value="1"/>
</dbReference>
<dbReference type="FunFam" id="3.10.290.10:FF:000022">
    <property type="entry name" value="Tyrosine--tRNA ligase"/>
    <property type="match status" value="1"/>
</dbReference>
<dbReference type="FunFam" id="3.40.50.620:FF:000061">
    <property type="entry name" value="Tyrosine--tRNA ligase"/>
    <property type="match status" value="1"/>
</dbReference>
<dbReference type="Gene3D" id="3.40.50.620">
    <property type="entry name" value="HUPs"/>
    <property type="match status" value="1"/>
</dbReference>
<dbReference type="Gene3D" id="3.10.290.10">
    <property type="entry name" value="RNA-binding S4 domain"/>
    <property type="match status" value="1"/>
</dbReference>
<dbReference type="Gene3D" id="1.10.240.10">
    <property type="entry name" value="Tyrosyl-Transfer RNA Synthetase"/>
    <property type="match status" value="1"/>
</dbReference>
<dbReference type="HAMAP" id="MF_02007">
    <property type="entry name" value="Tyr_tRNA_synth_type2"/>
    <property type="match status" value="1"/>
</dbReference>
<dbReference type="InterPro" id="IPR001412">
    <property type="entry name" value="aa-tRNA-synth_I_CS"/>
</dbReference>
<dbReference type="InterPro" id="IPR002305">
    <property type="entry name" value="aa-tRNA-synth_Ic"/>
</dbReference>
<dbReference type="InterPro" id="IPR000253">
    <property type="entry name" value="FHA_dom"/>
</dbReference>
<dbReference type="InterPro" id="IPR014729">
    <property type="entry name" value="Rossmann-like_a/b/a_fold"/>
</dbReference>
<dbReference type="InterPro" id="IPR002942">
    <property type="entry name" value="S4_RNA-bd"/>
</dbReference>
<dbReference type="InterPro" id="IPR036986">
    <property type="entry name" value="S4_RNA-bd_sf"/>
</dbReference>
<dbReference type="InterPro" id="IPR002307">
    <property type="entry name" value="Tyr-tRNA-ligase"/>
</dbReference>
<dbReference type="InterPro" id="IPR024088">
    <property type="entry name" value="Tyr-tRNA-ligase_bac-type"/>
</dbReference>
<dbReference type="InterPro" id="IPR024108">
    <property type="entry name" value="Tyr-tRNA-ligase_bac_2"/>
</dbReference>
<dbReference type="NCBIfam" id="TIGR00234">
    <property type="entry name" value="tyrS"/>
    <property type="match status" value="1"/>
</dbReference>
<dbReference type="PANTHER" id="PTHR11766:SF1">
    <property type="entry name" value="TYROSINE--TRNA LIGASE"/>
    <property type="match status" value="1"/>
</dbReference>
<dbReference type="PANTHER" id="PTHR11766">
    <property type="entry name" value="TYROSYL-TRNA SYNTHETASE"/>
    <property type="match status" value="1"/>
</dbReference>
<dbReference type="Pfam" id="PF01479">
    <property type="entry name" value="S4"/>
    <property type="match status" value="1"/>
</dbReference>
<dbReference type="Pfam" id="PF00579">
    <property type="entry name" value="tRNA-synt_1b"/>
    <property type="match status" value="1"/>
</dbReference>
<dbReference type="PRINTS" id="PR01040">
    <property type="entry name" value="TRNASYNTHTYR"/>
</dbReference>
<dbReference type="SMART" id="SM00363">
    <property type="entry name" value="S4"/>
    <property type="match status" value="1"/>
</dbReference>
<dbReference type="SUPFAM" id="SSF55174">
    <property type="entry name" value="Alpha-L RNA-binding motif"/>
    <property type="match status" value="1"/>
</dbReference>
<dbReference type="SUPFAM" id="SSF52374">
    <property type="entry name" value="Nucleotidylyl transferase"/>
    <property type="match status" value="1"/>
</dbReference>
<dbReference type="PROSITE" id="PS00178">
    <property type="entry name" value="AA_TRNA_LIGASE_I"/>
    <property type="match status" value="1"/>
</dbReference>
<dbReference type="PROSITE" id="PS50889">
    <property type="entry name" value="S4"/>
    <property type="match status" value="1"/>
</dbReference>
<evidence type="ECO:0000255" key="1">
    <source>
        <dbReference type="HAMAP-Rule" id="MF_02007"/>
    </source>
</evidence>